<gene>
    <name type="primary">Dll3</name>
</gene>
<accession>O88516</accession>
<accession>O35675</accession>
<accession>Q80W06</accession>
<accession>Q9QWL9</accession>
<accession>Q9QWZ7</accession>
<comment type="function">
    <text>Inhibits primary neurogenesis. May be required to divert neurons along a specific differentiation pathway. Plays a role in the formation of somite boundaries during segmentation of the paraxial mesoderm.</text>
</comment>
<comment type="subunit">
    <text evidence="9">Can bind and activate Notch-1 or another Notch receptor.</text>
</comment>
<comment type="subcellular location">
    <subcellularLocation>
        <location evidence="9">Membrane</location>
        <topology evidence="9">Single-pass type I membrane protein</topology>
    </subcellularLocation>
</comment>
<comment type="alternative products">
    <event type="alternative splicing"/>
    <isoform>
        <id>O88516-1</id>
        <name>2</name>
        <sequence type="displayed"/>
    </isoform>
    <isoform>
        <id>O88516-2</id>
        <name>1</name>
        <sequence type="described" ref="VSP_001376"/>
    </isoform>
</comment>
<comment type="tissue specificity">
    <text>Predominantly expressed in the neuroectoderm and paraxial mesoderm during embryogenesis.</text>
</comment>
<comment type="domain">
    <text>The DSL domain is required for binding to the Notch receptor.</text>
</comment>
<comment type="PTM">
    <text evidence="1">Ubiquitinated by MIB (MIB1 or MIB2), leading to its endocytosis and subsequent degradation.</text>
</comment>
<comment type="disease">
    <text evidence="5">A truncating mutation in Dll3 is the cause of the pudgy (pu) phenotype. Pudgy mice exhibit patterning defects at the earliest stages of somitogenesis. Adult pudgy mice present severe vertebral and rib deformities.</text>
</comment>
<dbReference type="EMBL" id="AF068865">
    <property type="protein sequence ID" value="AAC40170.1"/>
    <property type="molecule type" value="Genomic_DNA"/>
</dbReference>
<dbReference type="EMBL" id="AF068865">
    <property type="protein sequence ID" value="AAC40169.1"/>
    <property type="molecule type" value="Genomic_DNA"/>
</dbReference>
<dbReference type="EMBL" id="Y11895">
    <property type="protein sequence ID" value="CAA72637.1"/>
    <property type="molecule type" value="mRNA"/>
</dbReference>
<dbReference type="EMBL" id="AB013440">
    <property type="protein sequence ID" value="BAA33716.1"/>
    <property type="molecule type" value="mRNA"/>
</dbReference>
<dbReference type="EMBL" id="BC052002">
    <property type="protein sequence ID" value="AAH52002.1"/>
    <property type="molecule type" value="mRNA"/>
</dbReference>
<dbReference type="CCDS" id="CCDS39856.1">
    <molecule id="O88516-2"/>
</dbReference>
<dbReference type="RefSeq" id="NP_031892.2">
    <molecule id="O88516-2"/>
    <property type="nucleotide sequence ID" value="NM_007866.2"/>
</dbReference>
<dbReference type="SMR" id="O88516"/>
<dbReference type="BioGRID" id="199233">
    <property type="interactions" value="1"/>
</dbReference>
<dbReference type="FunCoup" id="O88516">
    <property type="interactions" value="114"/>
</dbReference>
<dbReference type="STRING" id="10090.ENSMUSP00000103951"/>
<dbReference type="PhosphoSitePlus" id="O88516"/>
<dbReference type="PaxDb" id="10090-ENSMUSP00000103951"/>
<dbReference type="ProteomicsDB" id="279433">
    <molecule id="O88516-1"/>
</dbReference>
<dbReference type="ProteomicsDB" id="279434">
    <molecule id="O88516-2"/>
</dbReference>
<dbReference type="ABCD" id="O88516">
    <property type="antibodies" value="8 sequenced antibodies"/>
</dbReference>
<dbReference type="Antibodypedia" id="30387">
    <property type="antibodies" value="601 antibodies from 33 providers"/>
</dbReference>
<dbReference type="DNASU" id="13389"/>
<dbReference type="Ensembl" id="ENSMUST00000108315.4">
    <molecule id="O88516-2"/>
    <property type="protein sequence ID" value="ENSMUSP00000103951.4"/>
    <property type="gene ID" value="ENSMUSG00000003436.12"/>
</dbReference>
<dbReference type="GeneID" id="13389"/>
<dbReference type="KEGG" id="mmu:13389"/>
<dbReference type="AGR" id="MGI:1096877"/>
<dbReference type="CTD" id="10683"/>
<dbReference type="MGI" id="MGI:1096877">
    <property type="gene designation" value="Dll3"/>
</dbReference>
<dbReference type="VEuPathDB" id="HostDB:ENSMUSG00000003436"/>
<dbReference type="eggNOG" id="KOG1217">
    <property type="taxonomic scope" value="Eukaryota"/>
</dbReference>
<dbReference type="GeneTree" id="ENSGT00940000162127"/>
<dbReference type="HOGENOM" id="CLU_033244_0_0_1"/>
<dbReference type="InParanoid" id="O88516"/>
<dbReference type="OMA" id="WSHPEDG"/>
<dbReference type="OrthoDB" id="283575at2759"/>
<dbReference type="PhylomeDB" id="O88516"/>
<dbReference type="TreeFam" id="TF351835"/>
<dbReference type="BioGRID-ORCS" id="13389">
    <property type="hits" value="3 hits in 79 CRISPR screens"/>
</dbReference>
<dbReference type="ChiTaRS" id="Dll3">
    <property type="organism name" value="mouse"/>
</dbReference>
<dbReference type="PRO" id="PR:O88516"/>
<dbReference type="Proteomes" id="UP000000589">
    <property type="component" value="Chromosome 7"/>
</dbReference>
<dbReference type="RNAct" id="O88516">
    <property type="molecule type" value="protein"/>
</dbReference>
<dbReference type="Bgee" id="ENSMUSG00000003436">
    <property type="expression patterns" value="Expressed in presomitic mesoderm and 95 other cell types or tissues"/>
</dbReference>
<dbReference type="ExpressionAtlas" id="O88516">
    <property type="expression patterns" value="baseline and differential"/>
</dbReference>
<dbReference type="GO" id="GO:0010008">
    <property type="term" value="C:endosome membrane"/>
    <property type="evidence" value="ECO:0000304"/>
    <property type="project" value="Reactome"/>
</dbReference>
<dbReference type="GO" id="GO:0005886">
    <property type="term" value="C:plasma membrane"/>
    <property type="evidence" value="ECO:0000314"/>
    <property type="project" value="MGI"/>
</dbReference>
<dbReference type="GO" id="GO:0005509">
    <property type="term" value="F:calcium ion binding"/>
    <property type="evidence" value="ECO:0007669"/>
    <property type="project" value="InterPro"/>
</dbReference>
<dbReference type="GO" id="GO:0005112">
    <property type="term" value="F:Notch binding"/>
    <property type="evidence" value="ECO:0000303"/>
    <property type="project" value="UniProtKB"/>
</dbReference>
<dbReference type="GO" id="GO:0001709">
    <property type="term" value="P:cell fate determination"/>
    <property type="evidence" value="ECO:0000303"/>
    <property type="project" value="UniProtKB"/>
</dbReference>
<dbReference type="GO" id="GO:0007386">
    <property type="term" value="P:compartment pattern specification"/>
    <property type="evidence" value="ECO:0000315"/>
    <property type="project" value="MGI"/>
</dbReference>
<dbReference type="GO" id="GO:0001701">
    <property type="term" value="P:in utero embryonic development"/>
    <property type="evidence" value="ECO:0000303"/>
    <property type="project" value="UniProtKB"/>
</dbReference>
<dbReference type="GO" id="GO:0050768">
    <property type="term" value="P:negative regulation of neurogenesis"/>
    <property type="evidence" value="ECO:0000314"/>
    <property type="project" value="MGI"/>
</dbReference>
<dbReference type="GO" id="GO:0007399">
    <property type="term" value="P:nervous system development"/>
    <property type="evidence" value="ECO:0000303"/>
    <property type="project" value="UniProtKB"/>
</dbReference>
<dbReference type="GO" id="GO:0007219">
    <property type="term" value="P:Notch signaling pathway"/>
    <property type="evidence" value="ECO:0000303"/>
    <property type="project" value="UniProtKB"/>
</dbReference>
<dbReference type="GO" id="GO:0048339">
    <property type="term" value="P:paraxial mesoderm development"/>
    <property type="evidence" value="ECO:0000315"/>
    <property type="project" value="MGI"/>
</dbReference>
<dbReference type="GO" id="GO:0001501">
    <property type="term" value="P:skeletal system development"/>
    <property type="evidence" value="ECO:0000315"/>
    <property type="project" value="UniProtKB"/>
</dbReference>
<dbReference type="GO" id="GO:0001756">
    <property type="term" value="P:somitogenesis"/>
    <property type="evidence" value="ECO:0000314"/>
    <property type="project" value="MGI"/>
</dbReference>
<dbReference type="GO" id="GO:0009888">
    <property type="term" value="P:tissue development"/>
    <property type="evidence" value="ECO:0000314"/>
    <property type="project" value="MGI"/>
</dbReference>
<dbReference type="CDD" id="cd00054">
    <property type="entry name" value="EGF_CA"/>
    <property type="match status" value="5"/>
</dbReference>
<dbReference type="FunFam" id="2.10.25.10:FF:000368">
    <property type="entry name" value="Delta-like 3 (Drosophila), isoform CRA_b"/>
    <property type="match status" value="1"/>
</dbReference>
<dbReference type="FunFam" id="2.10.25.10:FF:000403">
    <property type="entry name" value="Delta-like 3 (Drosophila), isoform CRA_b"/>
    <property type="match status" value="1"/>
</dbReference>
<dbReference type="FunFam" id="2.10.25.10:FF:000432">
    <property type="entry name" value="Delta-like 3 (Drosophila), isoform CRA_b"/>
    <property type="match status" value="1"/>
</dbReference>
<dbReference type="FunFam" id="2.10.25.10:FF:000585">
    <property type="entry name" value="Delta-like 3 (Drosophila), isoform CRA_b"/>
    <property type="match status" value="1"/>
</dbReference>
<dbReference type="FunFam" id="2.60.40.3510:FF:000005">
    <property type="entry name" value="Delta-like 3 (Drosophila), isoform CRA_b"/>
    <property type="match status" value="1"/>
</dbReference>
<dbReference type="FunFam" id="2.10.25.10:FF:000347">
    <property type="entry name" value="delta-like protein 3"/>
    <property type="match status" value="1"/>
</dbReference>
<dbReference type="FunFam" id="2.10.25.10:FF:000066">
    <property type="entry name" value="FAT atypical cadherin 4"/>
    <property type="match status" value="1"/>
</dbReference>
<dbReference type="Gene3D" id="2.60.40.3510">
    <property type="match status" value="1"/>
</dbReference>
<dbReference type="Gene3D" id="2.10.25.10">
    <property type="entry name" value="Laminin"/>
    <property type="match status" value="6"/>
</dbReference>
<dbReference type="InterPro" id="IPR001881">
    <property type="entry name" value="EGF-like_Ca-bd_dom"/>
</dbReference>
<dbReference type="InterPro" id="IPR013032">
    <property type="entry name" value="EGF-like_CS"/>
</dbReference>
<dbReference type="InterPro" id="IPR000742">
    <property type="entry name" value="EGF-like_dom"/>
</dbReference>
<dbReference type="InterPro" id="IPR009030">
    <property type="entry name" value="Growth_fac_rcpt_cys_sf"/>
</dbReference>
<dbReference type="InterPro" id="IPR011651">
    <property type="entry name" value="Notch_ligand_N"/>
</dbReference>
<dbReference type="InterPro" id="IPR050906">
    <property type="entry name" value="Notch_signaling"/>
</dbReference>
<dbReference type="PANTHER" id="PTHR24044:SF420">
    <property type="entry name" value="DELTA AND NOTCH-LIKE EPIDERMAL GROWTH FACTOR-RELATED RECEPTOR ISOFORM X1"/>
    <property type="match status" value="1"/>
</dbReference>
<dbReference type="PANTHER" id="PTHR24044">
    <property type="entry name" value="NOTCH LIGAND FAMILY MEMBER"/>
    <property type="match status" value="1"/>
</dbReference>
<dbReference type="Pfam" id="PF00008">
    <property type="entry name" value="EGF"/>
    <property type="match status" value="3"/>
</dbReference>
<dbReference type="Pfam" id="PF12661">
    <property type="entry name" value="hEGF"/>
    <property type="match status" value="2"/>
</dbReference>
<dbReference type="Pfam" id="PF07657">
    <property type="entry name" value="MNNL"/>
    <property type="match status" value="1"/>
</dbReference>
<dbReference type="PRINTS" id="PR00010">
    <property type="entry name" value="EGFBLOOD"/>
</dbReference>
<dbReference type="SMART" id="SM00181">
    <property type="entry name" value="EGF"/>
    <property type="match status" value="6"/>
</dbReference>
<dbReference type="SMART" id="SM00179">
    <property type="entry name" value="EGF_CA"/>
    <property type="match status" value="5"/>
</dbReference>
<dbReference type="SUPFAM" id="SSF57196">
    <property type="entry name" value="EGF/Laminin"/>
    <property type="match status" value="2"/>
</dbReference>
<dbReference type="SUPFAM" id="SSF57184">
    <property type="entry name" value="Growth factor receptor domain"/>
    <property type="match status" value="1"/>
</dbReference>
<dbReference type="PROSITE" id="PS00022">
    <property type="entry name" value="EGF_1"/>
    <property type="match status" value="6"/>
</dbReference>
<dbReference type="PROSITE" id="PS01186">
    <property type="entry name" value="EGF_2"/>
    <property type="match status" value="6"/>
</dbReference>
<dbReference type="PROSITE" id="PS50026">
    <property type="entry name" value="EGF_3"/>
    <property type="match status" value="6"/>
</dbReference>
<organism>
    <name type="scientific">Mus musculus</name>
    <name type="common">Mouse</name>
    <dbReference type="NCBI Taxonomy" id="10090"/>
    <lineage>
        <taxon>Eukaryota</taxon>
        <taxon>Metazoa</taxon>
        <taxon>Chordata</taxon>
        <taxon>Craniata</taxon>
        <taxon>Vertebrata</taxon>
        <taxon>Euteleostomi</taxon>
        <taxon>Mammalia</taxon>
        <taxon>Eutheria</taxon>
        <taxon>Euarchontoglires</taxon>
        <taxon>Glires</taxon>
        <taxon>Rodentia</taxon>
        <taxon>Myomorpha</taxon>
        <taxon>Muroidea</taxon>
        <taxon>Muridae</taxon>
        <taxon>Murinae</taxon>
        <taxon>Mus</taxon>
        <taxon>Mus</taxon>
    </lineage>
</organism>
<proteinExistence type="evidence at transcript level"/>
<reference key="1">
    <citation type="journal article" date="1997" name="Development">
        <title>Mouse Dll3: a novel divergent Delta gene which may complement the function of other Delta homologues during early pattern formation in the mouse embryo.</title>
        <authorList>
            <person name="Dunwoodie S.L."/>
            <person name="Henrique D.M.P."/>
            <person name="Harrison S.M."/>
            <person name="Beddington R.S.P."/>
        </authorList>
    </citation>
    <scope>NUCLEOTIDE SEQUENCE [MRNA] (ISOFORM 1)</scope>
    <source>
        <strain>C57BL/6 X DBA</strain>
        <tissue>Embryo</tissue>
    </source>
</reference>
<reference key="2">
    <citation type="journal article" date="1998" name="Nat. Genet.">
        <title>The mouse pudgy mutation disrupts Delta homologue Dll3 and initiation of early somite boundaries.</title>
        <authorList>
            <person name="Kusumi K."/>
            <person name="Sun E.S."/>
            <person name="Kerrebrock A.W."/>
            <person name="Bronson R.T."/>
            <person name="Chi D.-C."/>
            <person name="Bulotsky M.S."/>
            <person name="Spencer J.B."/>
            <person name="Birren B.W."/>
            <person name="Frankel W.N."/>
            <person name="Lander E.S."/>
        </authorList>
    </citation>
    <scope>NUCLEOTIDE SEQUENCE [GENOMIC DNA]</scope>
    <scope>ALTERNATIVE SPLICING</scope>
    <scope>INVOLVEMENT IN PU</scope>
    <source>
        <strain>129/SvJ</strain>
    </source>
</reference>
<reference key="3">
    <citation type="submission" date="1998-04" db="EMBL/GenBank/DDBJ databases">
        <title>Specific expression of a divergent type of Delta in a set of earliest generated neurons including the prospective subplate neurons.</title>
        <authorList>
            <person name="Nakayama K."/>
            <person name="Nakayama N."/>
            <person name="Tomooka Y."/>
            <person name="Hayashi Y."/>
            <person name="Takahashi M."/>
        </authorList>
    </citation>
    <scope>NUCLEOTIDE SEQUENCE [MRNA] (ISOFORM 1)</scope>
    <source>
        <tissue>Neural tube</tissue>
    </source>
</reference>
<reference key="4">
    <citation type="journal article" date="2004" name="Genome Res.">
        <title>The status, quality, and expansion of the NIH full-length cDNA project: the Mammalian Gene Collection (MGC).</title>
        <authorList>
            <consortium name="The MGC Project Team"/>
        </authorList>
    </citation>
    <scope>NUCLEOTIDE SEQUENCE [LARGE SCALE MRNA] (ISOFORM 1)</scope>
    <source>
        <strain>C57BL/6J</strain>
        <tissue>Brain</tissue>
    </source>
</reference>
<evidence type="ECO:0000250" key="1"/>
<evidence type="ECO:0000255" key="2"/>
<evidence type="ECO:0000255" key="3">
    <source>
        <dbReference type="PROSITE-ProRule" id="PRU00076"/>
    </source>
</evidence>
<evidence type="ECO:0000256" key="4">
    <source>
        <dbReference type="SAM" id="MobiDB-lite"/>
    </source>
</evidence>
<evidence type="ECO:0000269" key="5">
    <source>
    </source>
</evidence>
<evidence type="ECO:0000303" key="6">
    <source>
    </source>
</evidence>
<evidence type="ECO:0000303" key="7">
    <source>
    </source>
</evidence>
<evidence type="ECO:0000303" key="8">
    <source ref="3"/>
</evidence>
<evidence type="ECO:0000305" key="9"/>
<keyword id="KW-0025">Alternative splicing</keyword>
<keyword id="KW-0217">Developmental protein</keyword>
<keyword id="KW-0221">Differentiation</keyword>
<keyword id="KW-1015">Disulfide bond</keyword>
<keyword id="KW-0245">EGF-like domain</keyword>
<keyword id="KW-0472">Membrane</keyword>
<keyword id="KW-0914">Notch signaling pathway</keyword>
<keyword id="KW-1185">Reference proteome</keyword>
<keyword id="KW-0677">Repeat</keyword>
<keyword id="KW-0732">Signal</keyword>
<keyword id="KW-0812">Transmembrane</keyword>
<keyword id="KW-1133">Transmembrane helix</keyword>
<keyword id="KW-0832">Ubl conjugation</keyword>
<sequence length="592" mass="62069">MVSLQVSPLSQTLILAFLLPQALPAGVFELQIHSFGPGPGLGTPRSPCNARGPCRLFFRVCLKPGVSQEATESLCALGAALSTSVPVYTEHPGESAAALPLPDGLVRVPFRDAWPGTFSLVIETWREQLGEHAGGPAWNLLARVVGRRRLAAGGPWARDVQRTGTWELHFSYRARCEPPAVGAACARLCRSRSAPSRCGPGLRPCTPFPDECEAPSVCRPGCSPEHGYCEEPDECRCLEGWTGPLCTVPVSTSSCLNSRVPGPASTGCLLPGPGPCDGNPCANGGSCSETSGSFECACPRGFYGLRCEVSGVTCADGPCFNGGLCVGGEDPDSAYVCHCPPGFQGSNCEKRVDRCSLQPCQNGGLCLDLGHALRCRCRAGFAGPRCEHDLDDCAGRACANGGTCVEGGGSRRCSCALGFGGRDCRERADPCASRPCAHGGRCYAHFSGLVCACAPGYMGVRCEFAVRPDGADAVPAAPRGLRQADPQRFLLPPALGLLVAAGLAGAALLVIHVRRRGPGQDTGTRLLSGTREPSVHTLPDALNNLRLQDGAGDGPSSSADWNHPEDGDSRSIYVIPAPSIYAREDWLIQVLF</sequence>
<name>DLL3_MOUSE</name>
<protein>
    <recommendedName>
        <fullName>Delta-like protein 3</fullName>
    </recommendedName>
    <alternativeName>
        <fullName>Drosophila Delta homolog 3</fullName>
        <shortName>Delta3</shortName>
        <shortName>M-Delta-3</shortName>
    </alternativeName>
</protein>
<feature type="signal peptide" evidence="2">
    <location>
        <begin position="1"/>
        <end position="32"/>
    </location>
</feature>
<feature type="chain" id="PRO_0000007510" description="Delta-like protein 3">
    <location>
        <begin position="33"/>
        <end position="592"/>
    </location>
</feature>
<feature type="topological domain" description="Extracellular" evidence="2">
    <location>
        <begin position="33"/>
        <end position="490"/>
    </location>
</feature>
<feature type="transmembrane region" description="Helical" evidence="2">
    <location>
        <begin position="491"/>
        <end position="511"/>
    </location>
</feature>
<feature type="topological domain" description="Cytoplasmic" evidence="2">
    <location>
        <begin position="512"/>
        <end position="592"/>
    </location>
</feature>
<feature type="domain" description="DSL">
    <location>
        <begin position="174"/>
        <end position="213"/>
    </location>
</feature>
<feature type="domain" description="EGF-like 1" evidence="3">
    <location>
        <begin position="214"/>
        <end position="247"/>
    </location>
</feature>
<feature type="domain" description="EGF-like 2" evidence="3">
    <location>
        <begin position="272"/>
        <end position="308"/>
    </location>
</feature>
<feature type="domain" description="EGF-like 3" evidence="3">
    <location>
        <begin position="310"/>
        <end position="349"/>
    </location>
</feature>
<feature type="domain" description="EGF-like 4" evidence="3">
    <location>
        <begin position="351"/>
        <end position="387"/>
    </location>
</feature>
<feature type="domain" description="EGF-like 5" evidence="3">
    <location>
        <begin position="389"/>
        <end position="425"/>
    </location>
</feature>
<feature type="domain" description="EGF-like 6" evidence="3">
    <location>
        <begin position="427"/>
        <end position="463"/>
    </location>
</feature>
<feature type="region of interest" description="Disordered" evidence="4">
    <location>
        <begin position="548"/>
        <end position="567"/>
    </location>
</feature>
<feature type="disulfide bond" evidence="3">
    <location>
        <begin position="218"/>
        <end position="229"/>
    </location>
</feature>
<feature type="disulfide bond" evidence="3">
    <location>
        <begin position="222"/>
        <end position="235"/>
    </location>
</feature>
<feature type="disulfide bond" evidence="3">
    <location>
        <begin position="237"/>
        <end position="246"/>
    </location>
</feature>
<feature type="disulfide bond" evidence="3">
    <location>
        <begin position="276"/>
        <end position="287"/>
    </location>
</feature>
<feature type="disulfide bond" evidence="3">
    <location>
        <begin position="281"/>
        <end position="296"/>
    </location>
</feature>
<feature type="disulfide bond" evidence="3">
    <location>
        <begin position="298"/>
        <end position="307"/>
    </location>
</feature>
<feature type="disulfide bond" evidence="3">
    <location>
        <begin position="314"/>
        <end position="325"/>
    </location>
</feature>
<feature type="disulfide bond" evidence="3">
    <location>
        <begin position="319"/>
        <end position="337"/>
    </location>
</feature>
<feature type="disulfide bond" evidence="3">
    <location>
        <begin position="339"/>
        <end position="348"/>
    </location>
</feature>
<feature type="disulfide bond" evidence="3">
    <location>
        <begin position="355"/>
        <end position="366"/>
    </location>
</feature>
<feature type="disulfide bond" evidence="3">
    <location>
        <begin position="360"/>
        <end position="375"/>
    </location>
</feature>
<feature type="disulfide bond" evidence="3">
    <location>
        <begin position="377"/>
        <end position="386"/>
    </location>
</feature>
<feature type="disulfide bond" evidence="3">
    <location>
        <begin position="393"/>
        <end position="404"/>
    </location>
</feature>
<feature type="disulfide bond" evidence="3">
    <location>
        <begin position="398"/>
        <end position="413"/>
    </location>
</feature>
<feature type="disulfide bond" evidence="3">
    <location>
        <begin position="415"/>
        <end position="424"/>
    </location>
</feature>
<feature type="disulfide bond" evidence="3">
    <location>
        <begin position="431"/>
        <end position="442"/>
    </location>
</feature>
<feature type="disulfide bond" evidence="3">
    <location>
        <begin position="436"/>
        <end position="451"/>
    </location>
</feature>
<feature type="disulfide bond" evidence="3">
    <location>
        <begin position="453"/>
        <end position="462"/>
    </location>
</feature>
<feature type="splice variant" id="VSP_001376" description="In isoform 1." evidence="6 7 8">
    <original>DWLIQVLF</original>
    <variation>A</variation>
    <location>
        <begin position="585"/>
        <end position="592"/>
    </location>
</feature>
<feature type="sequence conflict" description="In Ref. 3; BAA33716." evidence="9" ref="3">
    <original>E</original>
    <variation>K</variation>
    <location>
        <position position="94"/>
    </location>
</feature>
<feature type="sequence conflict" description="In Ref. 1; CAA72637." evidence="9" ref="1">
    <original>G</original>
    <variation>A</variation>
    <location>
        <position position="401"/>
    </location>
</feature>